<proteinExistence type="inferred from homology"/>
<accession>O74770</accession>
<comment type="cofactor">
    <cofactor evidence="1">
        <name>thiamine diphosphate</name>
        <dbReference type="ChEBI" id="CHEBI:58937"/>
    </cofactor>
</comment>
<comment type="similarity">
    <text evidence="1">Belongs to the XFP family.</text>
</comment>
<evidence type="ECO:0000305" key="1"/>
<dbReference type="EC" id="4.1.2.-"/>
<dbReference type="EMBL" id="CU329671">
    <property type="protein sequence ID" value="CAA21153.1"/>
    <property type="molecule type" value="Genomic_DNA"/>
</dbReference>
<dbReference type="PIR" id="T39973">
    <property type="entry name" value="T39973"/>
</dbReference>
<dbReference type="RefSeq" id="NP_595963.1">
    <property type="nucleotide sequence ID" value="NM_001021872.2"/>
</dbReference>
<dbReference type="SMR" id="O74770"/>
<dbReference type="FunCoup" id="O74770">
    <property type="interactions" value="20"/>
</dbReference>
<dbReference type="STRING" id="284812.O74770"/>
<dbReference type="iPTMnet" id="O74770"/>
<dbReference type="PaxDb" id="4896-SPBC24C6.09c.1"/>
<dbReference type="EnsemblFungi" id="SPBC24C6.09c.1">
    <property type="protein sequence ID" value="SPBC24C6.09c.1:pep"/>
    <property type="gene ID" value="SPBC24C6.09c"/>
</dbReference>
<dbReference type="KEGG" id="spo:2540545"/>
<dbReference type="PomBase" id="SPBC24C6.09c"/>
<dbReference type="VEuPathDB" id="FungiDB:SPBC24C6.09c"/>
<dbReference type="eggNOG" id="ENOG502QUUF">
    <property type="taxonomic scope" value="Eukaryota"/>
</dbReference>
<dbReference type="HOGENOM" id="CLU_013954_2_0_1"/>
<dbReference type="InParanoid" id="O74770"/>
<dbReference type="OMA" id="GCMDDRE"/>
<dbReference type="PhylomeDB" id="O74770"/>
<dbReference type="PRO" id="PR:O74770"/>
<dbReference type="Proteomes" id="UP000002485">
    <property type="component" value="Chromosome II"/>
</dbReference>
<dbReference type="GO" id="GO:0005829">
    <property type="term" value="C:cytosol"/>
    <property type="evidence" value="ECO:0007005"/>
    <property type="project" value="PomBase"/>
</dbReference>
<dbReference type="GO" id="GO:0005634">
    <property type="term" value="C:nucleus"/>
    <property type="evidence" value="ECO:0007005"/>
    <property type="project" value="PomBase"/>
</dbReference>
<dbReference type="GO" id="GO:0016832">
    <property type="term" value="F:aldehyde-lyase activity"/>
    <property type="evidence" value="ECO:0007669"/>
    <property type="project" value="InterPro"/>
</dbReference>
<dbReference type="GO" id="GO:0005975">
    <property type="term" value="P:carbohydrate metabolic process"/>
    <property type="evidence" value="ECO:0007669"/>
    <property type="project" value="InterPro"/>
</dbReference>
<dbReference type="CDD" id="cd02011">
    <property type="entry name" value="TPP_PK"/>
    <property type="match status" value="1"/>
</dbReference>
<dbReference type="FunFam" id="3.40.50.970:FF:000011">
    <property type="entry name" value="Pyruvate dehydrogenase E1 component"/>
    <property type="match status" value="1"/>
</dbReference>
<dbReference type="Gene3D" id="3.40.50.920">
    <property type="match status" value="1"/>
</dbReference>
<dbReference type="Gene3D" id="3.40.50.970">
    <property type="match status" value="2"/>
</dbReference>
<dbReference type="InterPro" id="IPR029061">
    <property type="entry name" value="THDP-binding"/>
</dbReference>
<dbReference type="InterPro" id="IPR009014">
    <property type="entry name" value="Transketo_C/PFOR_II"/>
</dbReference>
<dbReference type="InterPro" id="IPR005593">
    <property type="entry name" value="Xul5P/Fru6P_PKetolase"/>
</dbReference>
<dbReference type="InterPro" id="IPR018969">
    <property type="entry name" value="Xul5P/Fru6P_PKetolase_C"/>
</dbReference>
<dbReference type="InterPro" id="IPR019790">
    <property type="entry name" value="Xul5P/Fru6P_PKetolase_CS"/>
</dbReference>
<dbReference type="InterPro" id="IPR018970">
    <property type="entry name" value="Xul5P/Fru6P_PKetolase_N"/>
</dbReference>
<dbReference type="InterPro" id="IPR019789">
    <property type="entry name" value="Xul5P/Fru6P_PKetolase_ThDP_BS"/>
</dbReference>
<dbReference type="PANTHER" id="PTHR31273">
    <property type="entry name" value="PHOSPHOKETOLASE-RELATED"/>
    <property type="match status" value="1"/>
</dbReference>
<dbReference type="PANTHER" id="PTHR31273:SF1">
    <property type="entry name" value="PHOSPHOKETOLASE-RELATED"/>
    <property type="match status" value="1"/>
</dbReference>
<dbReference type="Pfam" id="PF03894">
    <property type="entry name" value="XFP"/>
    <property type="match status" value="1"/>
</dbReference>
<dbReference type="Pfam" id="PF09363">
    <property type="entry name" value="XFP_C"/>
    <property type="match status" value="1"/>
</dbReference>
<dbReference type="Pfam" id="PF09364">
    <property type="entry name" value="XFP_N"/>
    <property type="match status" value="1"/>
</dbReference>
<dbReference type="PIRSF" id="PIRSF017245">
    <property type="entry name" value="Phosphoketolase"/>
    <property type="match status" value="1"/>
</dbReference>
<dbReference type="SUPFAM" id="SSF52518">
    <property type="entry name" value="Thiamin diphosphate-binding fold (THDP-binding)"/>
    <property type="match status" value="2"/>
</dbReference>
<dbReference type="SUPFAM" id="SSF52922">
    <property type="entry name" value="TK C-terminal domain-like"/>
    <property type="match status" value="1"/>
</dbReference>
<dbReference type="PROSITE" id="PS60002">
    <property type="entry name" value="PHOSPHOKETOLASE_1"/>
    <property type="match status" value="1"/>
</dbReference>
<dbReference type="PROSITE" id="PS60003">
    <property type="entry name" value="PHOSPHOKETOLASE_2"/>
    <property type="match status" value="1"/>
</dbReference>
<organism>
    <name type="scientific">Schizosaccharomyces pombe (strain 972 / ATCC 24843)</name>
    <name type="common">Fission yeast</name>
    <dbReference type="NCBI Taxonomy" id="284812"/>
    <lineage>
        <taxon>Eukaryota</taxon>
        <taxon>Fungi</taxon>
        <taxon>Dikarya</taxon>
        <taxon>Ascomycota</taxon>
        <taxon>Taphrinomycotina</taxon>
        <taxon>Schizosaccharomycetes</taxon>
        <taxon>Schizosaccharomycetales</taxon>
        <taxon>Schizosaccharomycetaceae</taxon>
        <taxon>Schizosaccharomyces</taxon>
    </lineage>
</organism>
<keyword id="KW-0456">Lyase</keyword>
<keyword id="KW-1185">Reference proteome</keyword>
<keyword id="KW-0786">Thiamine pyrophosphate</keyword>
<gene>
    <name type="ORF">SPBC24C6.09c</name>
</gene>
<feature type="chain" id="PRO_0000193895" description="Probable phosphoketolase">
    <location>
        <begin position="1"/>
        <end position="825"/>
    </location>
</feature>
<reference key="1">
    <citation type="journal article" date="2002" name="Nature">
        <title>The genome sequence of Schizosaccharomyces pombe.</title>
        <authorList>
            <person name="Wood V."/>
            <person name="Gwilliam R."/>
            <person name="Rajandream M.A."/>
            <person name="Lyne M.H."/>
            <person name="Lyne R."/>
            <person name="Stewart A."/>
            <person name="Sgouros J.G."/>
            <person name="Peat N."/>
            <person name="Hayles J."/>
            <person name="Baker S.G."/>
            <person name="Basham D."/>
            <person name="Bowman S."/>
            <person name="Brooks K."/>
            <person name="Brown D."/>
            <person name="Brown S."/>
            <person name="Chillingworth T."/>
            <person name="Churcher C.M."/>
            <person name="Collins M."/>
            <person name="Connor R."/>
            <person name="Cronin A."/>
            <person name="Davis P."/>
            <person name="Feltwell T."/>
            <person name="Fraser A."/>
            <person name="Gentles S."/>
            <person name="Goble A."/>
            <person name="Hamlin N."/>
            <person name="Harris D.E."/>
            <person name="Hidalgo J."/>
            <person name="Hodgson G."/>
            <person name="Holroyd S."/>
            <person name="Hornsby T."/>
            <person name="Howarth S."/>
            <person name="Huckle E.J."/>
            <person name="Hunt S."/>
            <person name="Jagels K."/>
            <person name="James K.D."/>
            <person name="Jones L."/>
            <person name="Jones M."/>
            <person name="Leather S."/>
            <person name="McDonald S."/>
            <person name="McLean J."/>
            <person name="Mooney P."/>
            <person name="Moule S."/>
            <person name="Mungall K.L."/>
            <person name="Murphy L.D."/>
            <person name="Niblett D."/>
            <person name="Odell C."/>
            <person name="Oliver K."/>
            <person name="O'Neil S."/>
            <person name="Pearson D."/>
            <person name="Quail M.A."/>
            <person name="Rabbinowitsch E."/>
            <person name="Rutherford K.M."/>
            <person name="Rutter S."/>
            <person name="Saunders D."/>
            <person name="Seeger K."/>
            <person name="Sharp S."/>
            <person name="Skelton J."/>
            <person name="Simmonds M.N."/>
            <person name="Squares R."/>
            <person name="Squares S."/>
            <person name="Stevens K."/>
            <person name="Taylor K."/>
            <person name="Taylor R.G."/>
            <person name="Tivey A."/>
            <person name="Walsh S.V."/>
            <person name="Warren T."/>
            <person name="Whitehead S."/>
            <person name="Woodward J.R."/>
            <person name="Volckaert G."/>
            <person name="Aert R."/>
            <person name="Robben J."/>
            <person name="Grymonprez B."/>
            <person name="Weltjens I."/>
            <person name="Vanstreels E."/>
            <person name="Rieger M."/>
            <person name="Schaefer M."/>
            <person name="Mueller-Auer S."/>
            <person name="Gabel C."/>
            <person name="Fuchs M."/>
            <person name="Duesterhoeft A."/>
            <person name="Fritzc C."/>
            <person name="Holzer E."/>
            <person name="Moestl D."/>
            <person name="Hilbert H."/>
            <person name="Borzym K."/>
            <person name="Langer I."/>
            <person name="Beck A."/>
            <person name="Lehrach H."/>
            <person name="Reinhardt R."/>
            <person name="Pohl T.M."/>
            <person name="Eger P."/>
            <person name="Zimmermann W."/>
            <person name="Wedler H."/>
            <person name="Wambutt R."/>
            <person name="Purnelle B."/>
            <person name="Goffeau A."/>
            <person name="Cadieu E."/>
            <person name="Dreano S."/>
            <person name="Gloux S."/>
            <person name="Lelaure V."/>
            <person name="Mottier S."/>
            <person name="Galibert F."/>
            <person name="Aves S.J."/>
            <person name="Xiang Z."/>
            <person name="Hunt C."/>
            <person name="Moore K."/>
            <person name="Hurst S.M."/>
            <person name="Lucas M."/>
            <person name="Rochet M."/>
            <person name="Gaillardin C."/>
            <person name="Tallada V.A."/>
            <person name="Garzon A."/>
            <person name="Thode G."/>
            <person name="Daga R.R."/>
            <person name="Cruzado L."/>
            <person name="Jimenez J."/>
            <person name="Sanchez M."/>
            <person name="del Rey F."/>
            <person name="Benito J."/>
            <person name="Dominguez A."/>
            <person name="Revuelta J.L."/>
            <person name="Moreno S."/>
            <person name="Armstrong J."/>
            <person name="Forsburg S.L."/>
            <person name="Cerutti L."/>
            <person name="Lowe T."/>
            <person name="McCombie W.R."/>
            <person name="Paulsen I."/>
            <person name="Potashkin J."/>
            <person name="Shpakovski G.V."/>
            <person name="Ussery D."/>
            <person name="Barrell B.G."/>
            <person name="Nurse P."/>
        </authorList>
    </citation>
    <scope>NUCLEOTIDE SEQUENCE [LARGE SCALE GENOMIC DNA]</scope>
    <source>
        <strain>972 / ATCC 24843</strain>
    </source>
</reference>
<name>PHK_SCHPO</name>
<protein>
    <recommendedName>
        <fullName>Probable phosphoketolase</fullName>
        <ecNumber>4.1.2.-</ecNumber>
    </recommendedName>
</protein>
<sequence length="825" mass="92510">MATQNDIPNSTPEDLAKQVEIAEKHPDPPAMPSRLPDSLKTLEAKIDTSKITDEEVANVHRFQRACDYLAASLIFLSNGLYTGGDLEEKDIKTRLLGHWGTCPGLSIVYSHCNRIINKYDLNMLFVVGPGHGAPAILSALFLEDSLGPFYPRYQFTKEGLNNLINTFSLPGGFPSHVNAEVPGAIHEGGELGYALSVSYGAVLDRPDLIVTCVVGDGEAETGPTATSWHAHKFLDPAESGAVIPVLELNGYKISERTIYGCMDDSELLSLFSGFGYEVAIVNDTPDQNRVMAATMDWAVERIHDIQHRARVNREEIKPRWPMIILRTPKGKGCPKYLNGKFLEGTFRAHQVPLKLARTDTNQRNLLKDWLNSYNCQDFLDEHGLPTKGITEHLPPREKRMGQRHETYNSYLPLKVPDWKKYGVKKGETTSATSVVGQYLDELLVTNDSTLRIFSPDELESNKLDGALKHSYRTMQTDPELMAKRGRVTEVLSEHLCQGFMQGYTLTGRTAIFPSYEAFMTIVVSMLVQYSKFLKMGLETGWHGKFGSLNYVTSSTWARQEHNGFSHQSPRFITTMLSLKPGVSRVYFPPDANCFLATVARCMKSENTINLMVSSKNPQPAYLSVEEAEHHCKAGASVWKFASTDNGENPDVVIAGVGNEIMFEVVKAAEMLQNDIPELRVRVINVTDLMVLSSLHPHGMNPAEFDSLFTKDRHVHFNYHGYVMDLKALLFDRIQGTRVTMEGYREEGTTTTPFNMMMCNNTSRYHVARMALQHALHNPTVAVNCNMLCAKYAWKLEEIENYIMENKDDPPEIYAAPVFKNKTSTL</sequence>